<sequence length="92" mass="10090">MPKLEMMLLVLLILPLSSFSAAGEQVVQGDQRSDGLARYLQRGGRDVQECQVVTPGSKWGRCCLNRVCGPMCCPASHCYCIYHRGRGHGCSC</sequence>
<reference key="1">
    <citation type="journal article" date="2009" name="Biochemistry">
        <title>Novel alpha D-conopeptides and their precursors identified by cDNA cloning define the D-conotoxin superfamily.</title>
        <authorList>
            <person name="Loughnan M.L."/>
            <person name="Nicke A."/>
            <person name="Lawrence N."/>
            <person name="Lewis R.J."/>
        </authorList>
    </citation>
    <scope>NUCLEOTIDE SEQUENCE [MRNA]</scope>
    <scope>PROTEIN SEQUENCE OF 46-69</scope>
    <scope>GAMMA-CARBOXYGLUTAMATION AT GLU-49</scope>
    <scope>HYDROXYLATION AT PRO-55</scope>
    <scope>SUBCELLULAR LOCATION</scope>
    <source>
        <tissue>Venom</tissue>
        <tissue>Venom duct</tissue>
    </source>
</reference>
<dbReference type="SMR" id="P0CE31"/>
<dbReference type="GO" id="GO:0005576">
    <property type="term" value="C:extracellular region"/>
    <property type="evidence" value="ECO:0007669"/>
    <property type="project" value="UniProtKB-SubCell"/>
</dbReference>
<dbReference type="GO" id="GO:0035792">
    <property type="term" value="C:host cell postsynaptic membrane"/>
    <property type="evidence" value="ECO:0007669"/>
    <property type="project" value="UniProtKB-KW"/>
</dbReference>
<dbReference type="GO" id="GO:0030550">
    <property type="term" value="F:acetylcholine receptor inhibitor activity"/>
    <property type="evidence" value="ECO:0007669"/>
    <property type="project" value="UniProtKB-KW"/>
</dbReference>
<dbReference type="GO" id="GO:0099106">
    <property type="term" value="F:ion channel regulator activity"/>
    <property type="evidence" value="ECO:0007669"/>
    <property type="project" value="UniProtKB-KW"/>
</dbReference>
<dbReference type="GO" id="GO:0090729">
    <property type="term" value="F:toxin activity"/>
    <property type="evidence" value="ECO:0007669"/>
    <property type="project" value="UniProtKB-KW"/>
</dbReference>
<evidence type="ECO:0000250" key="1">
    <source>
        <dbReference type="UniProtKB" id="A0A0A0VBX4"/>
    </source>
</evidence>
<evidence type="ECO:0000250" key="2">
    <source>
        <dbReference type="UniProtKB" id="C3VVN5"/>
    </source>
</evidence>
<evidence type="ECO:0000250" key="3">
    <source>
        <dbReference type="UniProtKB" id="P0C1W6"/>
    </source>
</evidence>
<evidence type="ECO:0000255" key="4"/>
<evidence type="ECO:0000269" key="5">
    <source>
    </source>
</evidence>
<evidence type="ECO:0000303" key="6">
    <source>
    </source>
</evidence>
<evidence type="ECO:0000305" key="7"/>
<evidence type="ECO:0000305" key="8">
    <source>
    </source>
</evidence>
<feature type="signal peptide" evidence="4">
    <location>
        <begin position="1"/>
        <end position="24"/>
    </location>
</feature>
<feature type="propeptide" id="PRO_0000391820" evidence="5">
    <location>
        <begin position="25"/>
        <end position="45"/>
    </location>
</feature>
<feature type="chain" id="PRO_0000391821" description="Alpha-conotoxin-like Mi20.2">
    <location>
        <begin position="46"/>
        <end position="92"/>
    </location>
</feature>
<feature type="modified residue" description="4-carboxyglutamate" evidence="5">
    <location>
        <position position="49"/>
    </location>
</feature>
<feature type="modified residue" description="4-hydroxyproline" evidence="5">
    <location>
        <position position="55"/>
    </location>
</feature>
<feature type="disulfide bond" description="Interchain (with C-63)" evidence="1">
    <location>
        <position position="50"/>
    </location>
</feature>
<feature type="disulfide bond" description="Interchain (with C-51)" evidence="1">
    <location>
        <position position="62"/>
    </location>
</feature>
<feature type="disulfide bond" evidence="1">
    <location>
        <begin position="63"/>
        <end position="72"/>
    </location>
</feature>
<feature type="disulfide bond" evidence="1">
    <location>
        <begin position="68"/>
        <end position="80"/>
    </location>
</feature>
<feature type="disulfide bond" evidence="1">
    <location>
        <begin position="73"/>
        <end position="90"/>
    </location>
</feature>
<feature type="disulfide bond" evidence="1">
    <location>
        <begin position="78"/>
        <end position="92"/>
    </location>
</feature>
<keyword id="KW-0008">Acetylcholine receptor inhibiting toxin</keyword>
<keyword id="KW-0903">Direct protein sequencing</keyword>
<keyword id="KW-1015">Disulfide bond</keyword>
<keyword id="KW-0301">Gamma-carboxyglutamic acid</keyword>
<keyword id="KW-0379">Hydroxylation</keyword>
<keyword id="KW-0872">Ion channel impairing toxin</keyword>
<keyword id="KW-0528">Neurotoxin</keyword>
<keyword id="KW-0629">Postsynaptic neurotoxin</keyword>
<keyword id="KW-0964">Secreted</keyword>
<keyword id="KW-0732">Signal</keyword>
<keyword id="KW-0800">Toxin</keyword>
<protein>
    <recommendedName>
        <fullName evidence="7">Alpha-conotoxin-like Mi20.2</fullName>
    </recommendedName>
    <alternativeName>
        <fullName evidence="6">Alpha-conotoxin-like Ml20.2</fullName>
    </alternativeName>
</protein>
<proteinExistence type="evidence at protein level"/>
<accession>P0CE31</accession>
<comment type="function">
    <text evidence="3">Alpha-conotoxins act on postsynaptic membranes, they bind to the nicotinic acetylcholine receptors (nAChR) and thus inhibit them. Through its two C-terminal domains, this homodimeric protein would bind to two nAChR allosteric sites, located outside the nAChR C-loop of the principal binding face and at the adjacent binding interface in a clockwise direction. This toxin specifically blocks mammalian neuronal nAChR of the alpha-7/CHRNA7, alpha-3-beta-2/CHRNA3-CHRNB2 and alpha-4-beta-2/CHRNA4-CHRNB2 subtypes.</text>
</comment>
<comment type="subunit">
    <text evidence="2">Hetero-, homo- or pseudo-homodimer (identical sequence, different post-translational modifications).</text>
</comment>
<comment type="subcellular location">
    <subcellularLocation>
        <location evidence="5">Secreted</location>
    </subcellularLocation>
</comment>
<comment type="tissue specificity">
    <text evidence="8">Expressed by the venom duct.</text>
</comment>
<comment type="domain">
    <text evidence="7">The cysteine framework is XX (C-CC-C-CC-C-C-C-C).</text>
</comment>
<comment type="domain">
    <text evidence="3">Displays a mini-granulin fold, a structure composed of two short, stacked beta-hairpins connected by two parallel disulfide bonds. This newly described fold is derived from the same cysteine connectivity as knottins (ICK fold). The name 'mini-granulin fold' comes from the structural homology with the N-terminal region of the human granulin.</text>
</comment>
<comment type="similarity">
    <text evidence="7">Belongs to the conotoxin D superfamily.</text>
</comment>
<name>CXAT2_CONMI</name>
<organism>
    <name type="scientific">Conus miles</name>
    <name type="common">Soldier cone</name>
    <name type="synonym">Mile cone</name>
    <dbReference type="NCBI Taxonomy" id="69564"/>
    <lineage>
        <taxon>Eukaryota</taxon>
        <taxon>Metazoa</taxon>
        <taxon>Spiralia</taxon>
        <taxon>Lophotrochozoa</taxon>
        <taxon>Mollusca</taxon>
        <taxon>Gastropoda</taxon>
        <taxon>Caenogastropoda</taxon>
        <taxon>Neogastropoda</taxon>
        <taxon>Conoidea</taxon>
        <taxon>Conidae</taxon>
        <taxon>Conus</taxon>
        <taxon>Rhizoconus</taxon>
    </lineage>
</organism>